<sequence length="358" mass="38942">MVMRSVDLRSDTVTRPTDAMREAMCNAEVDDDVLGYDPTARRLEEEMAKMMGKEAALFVPSGTMGNLISVMVHCDVRGSEVILGDNCHIHVYENGGISTIGGVHPKTVKNEEDGTMDLEAIEAAIRDPKGSTFYPSTRLICLENTHANSGGRCLSVEYTEKVGEIAKRHGVKLHIDGARLFNASIALGVPVHKLVKAADSVQVCLSKGLGAPVGSVIVGSQSFIEKAKTVRKTLGGGMRQIGVLCAAALVALQENLPKLQHDHKKAKLLAEGLNQMKGIRVNVAAVETNMIFMDMEDGSRLTAEKLRKNLEENGILLIRGNSSRIRIVIHHQITTSDVHYTLSCFQQAMLTMQEPSRT</sequence>
<feature type="chain" id="PRO_0000428659" description="Low-specificity L-threonine aldolase 1">
    <location>
        <begin position="1"/>
        <end position="358"/>
    </location>
</feature>
<feature type="modified residue" description="N6-(pyridoxal phosphate)lysine" evidence="1">
    <location>
        <position position="207"/>
    </location>
</feature>
<feature type="splice variant" id="VSP_054082" description="In isoform 2." evidence="6">
    <location>
        <begin position="270"/>
        <end position="283"/>
    </location>
</feature>
<feature type="mutagenesis site" description="In tha1-1; loss of function; 50-fold increase in seed Thr content and 2-fold decrease in seedling Gly content." evidence="2 3">
    <original>G</original>
    <variation>R</variation>
    <location>
        <position position="114"/>
    </location>
</feature>
<feature type="sequence conflict" description="In Ref. 6; AAM63785." evidence="7" ref="6">
    <original>N</original>
    <variation>K</variation>
    <location>
        <position position="321"/>
    </location>
</feature>
<comment type="function">
    <text evidence="2 3">Threonine aldolase involved in threonine degradation to glycine. May play a role in the removal of L-allo-threonine.</text>
</comment>
<comment type="catalytic activity">
    <reaction evidence="2">
        <text>L-threonine = acetaldehyde + glycine</text>
        <dbReference type="Rhea" id="RHEA:19625"/>
        <dbReference type="ChEBI" id="CHEBI:15343"/>
        <dbReference type="ChEBI" id="CHEBI:57305"/>
        <dbReference type="ChEBI" id="CHEBI:57926"/>
        <dbReference type="EC" id="4.1.2.48"/>
    </reaction>
    <physiologicalReaction direction="left-to-right" evidence="2">
        <dbReference type="Rhea" id="RHEA:19626"/>
    </physiologicalReaction>
</comment>
<comment type="catalytic activity">
    <reaction evidence="2">
        <text>L-allo-threonine = acetaldehyde + glycine</text>
        <dbReference type="Rhea" id="RHEA:26209"/>
        <dbReference type="ChEBI" id="CHEBI:15343"/>
        <dbReference type="ChEBI" id="CHEBI:57305"/>
        <dbReference type="ChEBI" id="CHEBI:58585"/>
        <dbReference type="EC" id="4.1.2.48"/>
    </reaction>
    <physiologicalReaction direction="left-to-right" evidence="2">
        <dbReference type="Rhea" id="RHEA:26210"/>
    </physiologicalReaction>
</comment>
<comment type="cofactor">
    <cofactor evidence="1">
        <name>pyridoxal 5'-phosphate</name>
        <dbReference type="ChEBI" id="CHEBI:597326"/>
    </cofactor>
</comment>
<comment type="biophysicochemical properties">
    <kinetics>
        <KM evidence="2">7.1 mM for L-threonine</KM>
    </kinetics>
</comment>
<comment type="pathway">
    <text evidence="2">Amino-acid degradation; L-threonine degradation via aldolase pathway; acetaldehyde and glycine from L-threonine: step 1/1.</text>
</comment>
<comment type="alternative products">
    <event type="alternative splicing"/>
    <isoform>
        <id>Q8RXU4-1</id>
        <name>1</name>
        <sequence type="displayed"/>
    </isoform>
    <isoform>
        <id>Q8RXU4-2</id>
        <name>2</name>
        <sequence type="described" ref="VSP_054082"/>
    </isoform>
</comment>
<comment type="tissue specificity">
    <text evidence="3">Expressed in root tips, seedlings, carpels and seeds.</text>
</comment>
<comment type="disruption phenotype">
    <text evidence="3">No visible phenotype under normal growth conditions, but mutant plants have 50-fold increase in seed Thr content and 2-fold decrease in seedling Gly content.</text>
</comment>
<comment type="similarity">
    <text evidence="7">Belongs to the threonine aldolase family.</text>
</comment>
<comment type="sequence caution" evidence="7">
    <conflict type="erroneous gene model prediction">
        <sequence resource="EMBL-CDS" id="AAF99780"/>
    </conflict>
</comment>
<protein>
    <recommendedName>
        <fullName evidence="4 5">Low-specificity L-threonine aldolase 1</fullName>
        <ecNumber evidence="2">4.1.2.48</ecNumber>
    </recommendedName>
    <alternativeName>
        <fullName evidence="4 5">Threonine aldolase 1</fullName>
    </alternativeName>
</protein>
<gene>
    <name evidence="4 5" type="primary">THA1</name>
    <name evidence="8" type="ordered locus">At1g08630</name>
    <name evidence="9" type="ORF">F22O13.11</name>
</gene>
<reference key="1">
    <citation type="journal article" date="2000" name="Nature">
        <title>Sequence and analysis of chromosome 1 of the plant Arabidopsis thaliana.</title>
        <authorList>
            <person name="Theologis A."/>
            <person name="Ecker J.R."/>
            <person name="Palm C.J."/>
            <person name="Federspiel N.A."/>
            <person name="Kaul S."/>
            <person name="White O."/>
            <person name="Alonso J."/>
            <person name="Altafi H."/>
            <person name="Araujo R."/>
            <person name="Bowman C.L."/>
            <person name="Brooks S.Y."/>
            <person name="Buehler E."/>
            <person name="Chan A."/>
            <person name="Chao Q."/>
            <person name="Chen H."/>
            <person name="Cheuk R.F."/>
            <person name="Chin C.W."/>
            <person name="Chung M.K."/>
            <person name="Conn L."/>
            <person name="Conway A.B."/>
            <person name="Conway A.R."/>
            <person name="Creasy T.H."/>
            <person name="Dewar K."/>
            <person name="Dunn P."/>
            <person name="Etgu P."/>
            <person name="Feldblyum T.V."/>
            <person name="Feng J.-D."/>
            <person name="Fong B."/>
            <person name="Fujii C.Y."/>
            <person name="Gill J.E."/>
            <person name="Goldsmith A.D."/>
            <person name="Haas B."/>
            <person name="Hansen N.F."/>
            <person name="Hughes B."/>
            <person name="Huizar L."/>
            <person name="Hunter J.L."/>
            <person name="Jenkins J."/>
            <person name="Johnson-Hopson C."/>
            <person name="Khan S."/>
            <person name="Khaykin E."/>
            <person name="Kim C.J."/>
            <person name="Koo H.L."/>
            <person name="Kremenetskaia I."/>
            <person name="Kurtz D.B."/>
            <person name="Kwan A."/>
            <person name="Lam B."/>
            <person name="Langin-Hooper S."/>
            <person name="Lee A."/>
            <person name="Lee J.M."/>
            <person name="Lenz C.A."/>
            <person name="Li J.H."/>
            <person name="Li Y.-P."/>
            <person name="Lin X."/>
            <person name="Liu S.X."/>
            <person name="Liu Z.A."/>
            <person name="Luros J.S."/>
            <person name="Maiti R."/>
            <person name="Marziali A."/>
            <person name="Militscher J."/>
            <person name="Miranda M."/>
            <person name="Nguyen M."/>
            <person name="Nierman W.C."/>
            <person name="Osborne B.I."/>
            <person name="Pai G."/>
            <person name="Peterson J."/>
            <person name="Pham P.K."/>
            <person name="Rizzo M."/>
            <person name="Rooney T."/>
            <person name="Rowley D."/>
            <person name="Sakano H."/>
            <person name="Salzberg S.L."/>
            <person name="Schwartz J.R."/>
            <person name="Shinn P."/>
            <person name="Southwick A.M."/>
            <person name="Sun H."/>
            <person name="Tallon L.J."/>
            <person name="Tambunga G."/>
            <person name="Toriumi M.J."/>
            <person name="Town C.D."/>
            <person name="Utterback T."/>
            <person name="Van Aken S."/>
            <person name="Vaysberg M."/>
            <person name="Vysotskaia V.S."/>
            <person name="Walker M."/>
            <person name="Wu D."/>
            <person name="Yu G."/>
            <person name="Fraser C.M."/>
            <person name="Venter J.C."/>
            <person name="Davis R.W."/>
        </authorList>
    </citation>
    <scope>NUCLEOTIDE SEQUENCE [LARGE SCALE GENOMIC DNA]</scope>
    <source>
        <strain>cv. Columbia</strain>
    </source>
</reference>
<reference key="2">
    <citation type="journal article" date="2017" name="Plant J.">
        <title>Araport11: a complete reannotation of the Arabidopsis thaliana reference genome.</title>
        <authorList>
            <person name="Cheng C.Y."/>
            <person name="Krishnakumar V."/>
            <person name="Chan A.P."/>
            <person name="Thibaud-Nissen F."/>
            <person name="Schobel S."/>
            <person name="Town C.D."/>
        </authorList>
    </citation>
    <scope>GENOME REANNOTATION</scope>
    <source>
        <strain>cv. Columbia</strain>
    </source>
</reference>
<reference key="3">
    <citation type="journal article" date="2003" name="Science">
        <title>Empirical analysis of transcriptional activity in the Arabidopsis genome.</title>
        <authorList>
            <person name="Yamada K."/>
            <person name="Lim J."/>
            <person name="Dale J.M."/>
            <person name="Chen H."/>
            <person name="Shinn P."/>
            <person name="Palm C.J."/>
            <person name="Southwick A.M."/>
            <person name="Wu H.C."/>
            <person name="Kim C.J."/>
            <person name="Nguyen M."/>
            <person name="Pham P.K."/>
            <person name="Cheuk R.F."/>
            <person name="Karlin-Newmann G."/>
            <person name="Liu S.X."/>
            <person name="Lam B."/>
            <person name="Sakano H."/>
            <person name="Wu T."/>
            <person name="Yu G."/>
            <person name="Miranda M."/>
            <person name="Quach H.L."/>
            <person name="Tripp M."/>
            <person name="Chang C.H."/>
            <person name="Lee J.M."/>
            <person name="Toriumi M.J."/>
            <person name="Chan M.M."/>
            <person name="Tang C.C."/>
            <person name="Onodera C.S."/>
            <person name="Deng J.M."/>
            <person name="Akiyama K."/>
            <person name="Ansari Y."/>
            <person name="Arakawa T."/>
            <person name="Banh J."/>
            <person name="Banno F."/>
            <person name="Bowser L."/>
            <person name="Brooks S.Y."/>
            <person name="Carninci P."/>
            <person name="Chao Q."/>
            <person name="Choy N."/>
            <person name="Enju A."/>
            <person name="Goldsmith A.D."/>
            <person name="Gurjal M."/>
            <person name="Hansen N.F."/>
            <person name="Hayashizaki Y."/>
            <person name="Johnson-Hopson C."/>
            <person name="Hsuan V.W."/>
            <person name="Iida K."/>
            <person name="Karnes M."/>
            <person name="Khan S."/>
            <person name="Koesema E."/>
            <person name="Ishida J."/>
            <person name="Jiang P.X."/>
            <person name="Jones T."/>
            <person name="Kawai J."/>
            <person name="Kamiya A."/>
            <person name="Meyers C."/>
            <person name="Nakajima M."/>
            <person name="Narusaka M."/>
            <person name="Seki M."/>
            <person name="Sakurai T."/>
            <person name="Satou M."/>
            <person name="Tamse R."/>
            <person name="Vaysberg M."/>
            <person name="Wallender E.K."/>
            <person name="Wong C."/>
            <person name="Yamamura Y."/>
            <person name="Yuan S."/>
            <person name="Shinozaki K."/>
            <person name="Davis R.W."/>
            <person name="Theologis A."/>
            <person name="Ecker J.R."/>
        </authorList>
    </citation>
    <scope>NUCLEOTIDE SEQUENCE [LARGE SCALE MRNA] (ISOFORM 1)</scope>
    <source>
        <strain>cv. Columbia</strain>
    </source>
</reference>
<reference key="4">
    <citation type="journal article" date="2009" name="DNA Res.">
        <title>Analysis of multiple occurrences of alternative splicing events in Arabidopsis thaliana using novel sequenced full-length cDNAs.</title>
        <authorList>
            <person name="Iida K."/>
            <person name="Fukami-Kobayashi K."/>
            <person name="Toyoda A."/>
            <person name="Sakaki Y."/>
            <person name="Kobayashi M."/>
            <person name="Seki M."/>
            <person name="Shinozaki K."/>
        </authorList>
    </citation>
    <scope>NUCLEOTIDE SEQUENCE [LARGE SCALE MRNA] (ISOFORM 2)</scope>
    <source>
        <strain>cv. Columbia</strain>
    </source>
</reference>
<reference key="5">
    <citation type="submission" date="2006-07" db="EMBL/GenBank/DDBJ databases">
        <title>Large-scale analysis of RIKEN Arabidopsis full-length (RAFL) cDNAs.</title>
        <authorList>
            <person name="Totoki Y."/>
            <person name="Seki M."/>
            <person name="Ishida J."/>
            <person name="Nakajima M."/>
            <person name="Enju A."/>
            <person name="Kamiya A."/>
            <person name="Narusaka M."/>
            <person name="Shin-i T."/>
            <person name="Nakagawa M."/>
            <person name="Sakamoto N."/>
            <person name="Oishi K."/>
            <person name="Kohara Y."/>
            <person name="Kobayashi M."/>
            <person name="Toyoda A."/>
            <person name="Sakaki Y."/>
            <person name="Sakurai T."/>
            <person name="Iida K."/>
            <person name="Akiyama K."/>
            <person name="Satou M."/>
            <person name="Toyoda T."/>
            <person name="Konagaya A."/>
            <person name="Carninci P."/>
            <person name="Kawai J."/>
            <person name="Hayashizaki Y."/>
            <person name="Shinozaki K."/>
        </authorList>
    </citation>
    <scope>NUCLEOTIDE SEQUENCE [LARGE SCALE MRNA] (ISOFORM 1)</scope>
    <source>
        <strain>cv. Columbia</strain>
    </source>
</reference>
<reference key="6">
    <citation type="submission" date="2002-03" db="EMBL/GenBank/DDBJ databases">
        <title>Full-length cDNA from Arabidopsis thaliana.</title>
        <authorList>
            <person name="Brover V.V."/>
            <person name="Troukhan M.E."/>
            <person name="Alexandrov N.A."/>
            <person name="Lu Y.-P."/>
            <person name="Flavell R.B."/>
            <person name="Feldmann K.A."/>
        </authorList>
    </citation>
    <scope>NUCLEOTIDE SEQUENCE [LARGE SCALE MRNA] (ISOFORM 1)</scope>
</reference>
<reference key="7">
    <citation type="journal article" date="2004" name="Plant J.">
        <title>Application of a high-throughput HPLC-MS/MS assay to Arabidopsis mutant screening; evidence that threonine aldolase plays a role in seed nutritional quality.</title>
        <authorList>
            <person name="Jander G."/>
            <person name="Norris S.R."/>
            <person name="Joshi V."/>
            <person name="Fraga M."/>
            <person name="Rugg A."/>
            <person name="Yu S."/>
            <person name="Li L."/>
            <person name="Last R.L."/>
        </authorList>
    </citation>
    <scope>FUNCTION</scope>
    <scope>BIOPHYSICOCHEMICAL PROPERTIES</scope>
    <scope>CATALYTIC ACTIVITY</scope>
    <scope>PATHWAY</scope>
    <scope>MUTAGENESIS OF GLY-114</scope>
    <source>
        <strain>cv. Columbia</strain>
        <strain>cv. Landsberg erecta</strain>
    </source>
</reference>
<reference key="8">
    <citation type="journal article" date="2006" name="Plant Cell">
        <title>Two Arabidopsis threonine aldolases are nonredundant and compete with threonine deaminase for a common substrate pool.</title>
        <authorList>
            <person name="Joshi V."/>
            <person name="Laubengayer K.M."/>
            <person name="Schauer N."/>
            <person name="Fernie A.R."/>
            <person name="Jander G."/>
        </authorList>
    </citation>
    <scope>FUNCTION</scope>
    <scope>TISSUE SPECIFICITY</scope>
    <scope>DISRUPTION PHENOTYPE</scope>
    <scope>MUTAGENESIS OF GLY-114</scope>
    <source>
        <strain>cv. Columbia</strain>
    </source>
</reference>
<evidence type="ECO:0000250" key="1">
    <source>
        <dbReference type="UniProtKB" id="O07051"/>
    </source>
</evidence>
<evidence type="ECO:0000269" key="2">
    <source>
    </source>
</evidence>
<evidence type="ECO:0000269" key="3">
    <source>
    </source>
</evidence>
<evidence type="ECO:0000303" key="4">
    <source>
    </source>
</evidence>
<evidence type="ECO:0000303" key="5">
    <source>
    </source>
</evidence>
<evidence type="ECO:0000303" key="6">
    <source>
    </source>
</evidence>
<evidence type="ECO:0000305" key="7"/>
<evidence type="ECO:0000312" key="8">
    <source>
        <dbReference type="Araport" id="AT1G08630"/>
    </source>
</evidence>
<evidence type="ECO:0000312" key="9">
    <source>
        <dbReference type="EMBL" id="AAF99780.1"/>
    </source>
</evidence>
<name>THA1_ARATH</name>
<dbReference type="EC" id="4.1.2.48" evidence="2"/>
<dbReference type="EMBL" id="AC003981">
    <property type="protein sequence ID" value="AAF99780.1"/>
    <property type="status" value="ALT_SEQ"/>
    <property type="molecule type" value="Genomic_DNA"/>
</dbReference>
<dbReference type="EMBL" id="CP002684">
    <property type="protein sequence ID" value="AEE28320.1"/>
    <property type="molecule type" value="Genomic_DNA"/>
</dbReference>
<dbReference type="EMBL" id="CP002684">
    <property type="protein sequence ID" value="AEE28321.1"/>
    <property type="molecule type" value="Genomic_DNA"/>
</dbReference>
<dbReference type="EMBL" id="CP002684">
    <property type="protein sequence ID" value="AEE28322.1"/>
    <property type="molecule type" value="Genomic_DNA"/>
</dbReference>
<dbReference type="EMBL" id="CP002684">
    <property type="protein sequence ID" value="AEE28323.1"/>
    <property type="molecule type" value="Genomic_DNA"/>
</dbReference>
<dbReference type="EMBL" id="CP002684">
    <property type="protein sequence ID" value="AEE28324.1"/>
    <property type="molecule type" value="Genomic_DNA"/>
</dbReference>
<dbReference type="EMBL" id="CP002684">
    <property type="protein sequence ID" value="ANM59683.1"/>
    <property type="molecule type" value="Genomic_DNA"/>
</dbReference>
<dbReference type="EMBL" id="AY080670">
    <property type="protein sequence ID" value="AAL86346.1"/>
    <property type="molecule type" value="mRNA"/>
</dbReference>
<dbReference type="EMBL" id="AY117227">
    <property type="protein sequence ID" value="AAM51302.1"/>
    <property type="molecule type" value="mRNA"/>
</dbReference>
<dbReference type="EMBL" id="AK317034">
    <property type="protein sequence ID" value="BAH19728.1"/>
    <property type="molecule type" value="mRNA"/>
</dbReference>
<dbReference type="EMBL" id="AK230078">
    <property type="protein sequence ID" value="BAF01898.1"/>
    <property type="molecule type" value="mRNA"/>
</dbReference>
<dbReference type="EMBL" id="AY086734">
    <property type="protein sequence ID" value="AAM63785.1"/>
    <property type="molecule type" value="mRNA"/>
</dbReference>
<dbReference type="PIR" id="T00716">
    <property type="entry name" value="T00716"/>
</dbReference>
<dbReference type="RefSeq" id="NP_001031001.2">
    <molecule id="Q8RXU4-1"/>
    <property type="nucleotide sequence ID" value="NM_001035924.2"/>
</dbReference>
<dbReference type="RefSeq" id="NP_001077492.1">
    <molecule id="Q8RXU4-2"/>
    <property type="nucleotide sequence ID" value="NM_001084023.1"/>
</dbReference>
<dbReference type="RefSeq" id="NP_001318956.1">
    <molecule id="Q8RXU4-1"/>
    <property type="nucleotide sequence ID" value="NM_001331780.1"/>
</dbReference>
<dbReference type="RefSeq" id="NP_563822.1">
    <molecule id="Q8RXU4-1"/>
    <property type="nucleotide sequence ID" value="NM_100736.3"/>
</dbReference>
<dbReference type="RefSeq" id="NP_849614.1">
    <molecule id="Q8RXU4-1"/>
    <property type="nucleotide sequence ID" value="NM_179283.2"/>
</dbReference>
<dbReference type="RefSeq" id="NP_849615.1">
    <molecule id="Q8RXU4-1"/>
    <property type="nucleotide sequence ID" value="NM_179284.4"/>
</dbReference>
<dbReference type="SMR" id="Q8RXU4"/>
<dbReference type="FunCoup" id="Q8RXU4">
    <property type="interactions" value="1131"/>
</dbReference>
<dbReference type="STRING" id="3702.Q8RXU4"/>
<dbReference type="PaxDb" id="3702-AT1G08630.1"/>
<dbReference type="ProteomicsDB" id="234327">
    <molecule id="Q8RXU4-1"/>
</dbReference>
<dbReference type="EnsemblPlants" id="AT1G08630.1">
    <molecule id="Q8RXU4-1"/>
    <property type="protein sequence ID" value="AT1G08630.1"/>
    <property type="gene ID" value="AT1G08630"/>
</dbReference>
<dbReference type="EnsemblPlants" id="AT1G08630.2">
    <molecule id="Q8RXU4-1"/>
    <property type="protein sequence ID" value="AT1G08630.2"/>
    <property type="gene ID" value="AT1G08630"/>
</dbReference>
<dbReference type="EnsemblPlants" id="AT1G08630.3">
    <molecule id="Q8RXU4-1"/>
    <property type="protein sequence ID" value="AT1G08630.3"/>
    <property type="gene ID" value="AT1G08630"/>
</dbReference>
<dbReference type="EnsemblPlants" id="AT1G08630.4">
    <molecule id="Q8RXU4-1"/>
    <property type="protein sequence ID" value="AT1G08630.4"/>
    <property type="gene ID" value="AT1G08630"/>
</dbReference>
<dbReference type="EnsemblPlants" id="AT1G08630.5">
    <molecule id="Q8RXU4-2"/>
    <property type="protein sequence ID" value="AT1G08630.5"/>
    <property type="gene ID" value="AT1G08630"/>
</dbReference>
<dbReference type="EnsemblPlants" id="AT1G08630.6">
    <molecule id="Q8RXU4-1"/>
    <property type="protein sequence ID" value="AT1G08630.6"/>
    <property type="gene ID" value="AT1G08630"/>
</dbReference>
<dbReference type="GeneID" id="837385"/>
<dbReference type="Gramene" id="AT1G08630.1">
    <molecule id="Q8RXU4-1"/>
    <property type="protein sequence ID" value="AT1G08630.1"/>
    <property type="gene ID" value="AT1G08630"/>
</dbReference>
<dbReference type="Gramene" id="AT1G08630.2">
    <molecule id="Q8RXU4-1"/>
    <property type="protein sequence ID" value="AT1G08630.2"/>
    <property type="gene ID" value="AT1G08630"/>
</dbReference>
<dbReference type="Gramene" id="AT1G08630.3">
    <molecule id="Q8RXU4-1"/>
    <property type="protein sequence ID" value="AT1G08630.3"/>
    <property type="gene ID" value="AT1G08630"/>
</dbReference>
<dbReference type="Gramene" id="AT1G08630.4">
    <molecule id="Q8RXU4-1"/>
    <property type="protein sequence ID" value="AT1G08630.4"/>
    <property type="gene ID" value="AT1G08630"/>
</dbReference>
<dbReference type="Gramene" id="AT1G08630.5">
    <molecule id="Q8RXU4-2"/>
    <property type="protein sequence ID" value="AT1G08630.5"/>
    <property type="gene ID" value="AT1G08630"/>
</dbReference>
<dbReference type="Gramene" id="AT1G08630.6">
    <molecule id="Q8RXU4-1"/>
    <property type="protein sequence ID" value="AT1G08630.6"/>
    <property type="gene ID" value="AT1G08630"/>
</dbReference>
<dbReference type="KEGG" id="ath:AT1G08630"/>
<dbReference type="Araport" id="AT1G08630"/>
<dbReference type="TAIR" id="AT1G08630">
    <property type="gene designation" value="THA1"/>
</dbReference>
<dbReference type="eggNOG" id="KOG1368">
    <property type="taxonomic scope" value="Eukaryota"/>
</dbReference>
<dbReference type="InParanoid" id="Q8RXU4"/>
<dbReference type="OMA" id="VQTNIVI"/>
<dbReference type="PhylomeDB" id="Q8RXU4"/>
<dbReference type="SABIO-RK" id="Q8RXU4"/>
<dbReference type="UniPathway" id="UPA00044">
    <property type="reaction ID" value="UER00429"/>
</dbReference>
<dbReference type="PRO" id="PR:Q8RXU4"/>
<dbReference type="Proteomes" id="UP000006548">
    <property type="component" value="Chromosome 1"/>
</dbReference>
<dbReference type="ExpressionAtlas" id="Q8RXU4">
    <property type="expression patterns" value="baseline and differential"/>
</dbReference>
<dbReference type="GO" id="GO:0008732">
    <property type="term" value="F:L-allo-threonine aldolase activity"/>
    <property type="evidence" value="ECO:0007669"/>
    <property type="project" value="RHEA"/>
</dbReference>
<dbReference type="GO" id="GO:0004793">
    <property type="term" value="F:threonine aldolase activity"/>
    <property type="evidence" value="ECO:0000314"/>
    <property type="project" value="TAIR"/>
</dbReference>
<dbReference type="GO" id="GO:0006567">
    <property type="term" value="P:threonine catabolic process"/>
    <property type="evidence" value="ECO:0000315"/>
    <property type="project" value="TAIR"/>
</dbReference>
<dbReference type="CDD" id="cd06502">
    <property type="entry name" value="TA_like"/>
    <property type="match status" value="1"/>
</dbReference>
<dbReference type="FunFam" id="3.90.1150.10:FF:000041">
    <property type="entry name" value="Low-specificity L-threonine aldolase"/>
    <property type="match status" value="1"/>
</dbReference>
<dbReference type="FunFam" id="3.40.640.10:FF:000063">
    <property type="entry name" value="probable low-specificity L-threonine aldolase 1"/>
    <property type="match status" value="1"/>
</dbReference>
<dbReference type="Gene3D" id="3.90.1150.10">
    <property type="entry name" value="Aspartate Aminotransferase, domain 1"/>
    <property type="match status" value="1"/>
</dbReference>
<dbReference type="Gene3D" id="3.40.640.10">
    <property type="entry name" value="Type I PLP-dependent aspartate aminotransferase-like (Major domain)"/>
    <property type="match status" value="1"/>
</dbReference>
<dbReference type="InterPro" id="IPR001597">
    <property type="entry name" value="ArAA_b-elim_lyase/Thr_aldolase"/>
</dbReference>
<dbReference type="InterPro" id="IPR023603">
    <property type="entry name" value="Low_specificity_L-TA-like"/>
</dbReference>
<dbReference type="InterPro" id="IPR015424">
    <property type="entry name" value="PyrdxlP-dep_Trfase"/>
</dbReference>
<dbReference type="InterPro" id="IPR015421">
    <property type="entry name" value="PyrdxlP-dep_Trfase_major"/>
</dbReference>
<dbReference type="InterPro" id="IPR015422">
    <property type="entry name" value="PyrdxlP-dep_Trfase_small"/>
</dbReference>
<dbReference type="NCBIfam" id="NF041359">
    <property type="entry name" value="GntG_guanitoxin"/>
    <property type="match status" value="1"/>
</dbReference>
<dbReference type="NCBIfam" id="NF007825">
    <property type="entry name" value="PRK10534.1"/>
    <property type="match status" value="1"/>
</dbReference>
<dbReference type="PANTHER" id="PTHR48097:SF9">
    <property type="entry name" value="L-THREONINE ALDOLASE"/>
    <property type="match status" value="1"/>
</dbReference>
<dbReference type="PANTHER" id="PTHR48097">
    <property type="entry name" value="L-THREONINE ALDOLASE-RELATED"/>
    <property type="match status" value="1"/>
</dbReference>
<dbReference type="Pfam" id="PF01212">
    <property type="entry name" value="Beta_elim_lyase"/>
    <property type="match status" value="1"/>
</dbReference>
<dbReference type="PIRSF" id="PIRSF017617">
    <property type="entry name" value="Thr_aldolase"/>
    <property type="match status" value="1"/>
</dbReference>
<dbReference type="SUPFAM" id="SSF53383">
    <property type="entry name" value="PLP-dependent transferases"/>
    <property type="match status" value="1"/>
</dbReference>
<organism>
    <name type="scientific">Arabidopsis thaliana</name>
    <name type="common">Mouse-ear cress</name>
    <dbReference type="NCBI Taxonomy" id="3702"/>
    <lineage>
        <taxon>Eukaryota</taxon>
        <taxon>Viridiplantae</taxon>
        <taxon>Streptophyta</taxon>
        <taxon>Embryophyta</taxon>
        <taxon>Tracheophyta</taxon>
        <taxon>Spermatophyta</taxon>
        <taxon>Magnoliopsida</taxon>
        <taxon>eudicotyledons</taxon>
        <taxon>Gunneridae</taxon>
        <taxon>Pentapetalae</taxon>
        <taxon>rosids</taxon>
        <taxon>malvids</taxon>
        <taxon>Brassicales</taxon>
        <taxon>Brassicaceae</taxon>
        <taxon>Camelineae</taxon>
        <taxon>Arabidopsis</taxon>
    </lineage>
</organism>
<accession>Q8RXU4</accession>
<accession>B9DG61</accession>
<accession>Q2V4P5</accession>
<accession>Q8LC88</accession>
<accession>Q9FRS2</accession>
<proteinExistence type="evidence at protein level"/>
<keyword id="KW-0025">Alternative splicing</keyword>
<keyword id="KW-0456">Lyase</keyword>
<keyword id="KW-0663">Pyridoxal phosphate</keyword>
<keyword id="KW-1185">Reference proteome</keyword>